<proteinExistence type="inferred from homology"/>
<name>MURB_BUCAP</name>
<reference key="1">
    <citation type="journal article" date="2002" name="Science">
        <title>50 million years of genomic stasis in endosymbiotic bacteria.</title>
        <authorList>
            <person name="Tamas I."/>
            <person name="Klasson L."/>
            <person name="Canbaeck B."/>
            <person name="Naeslund A.K."/>
            <person name="Eriksson A.-S."/>
            <person name="Wernegreen J.J."/>
            <person name="Sandstroem J.P."/>
            <person name="Moran N.A."/>
            <person name="Andersson S.G.E."/>
        </authorList>
    </citation>
    <scope>NUCLEOTIDE SEQUENCE [LARGE SCALE GENOMIC DNA]</scope>
    <source>
        <strain>Sg</strain>
    </source>
</reference>
<accession>Q8KA63</accession>
<organism>
    <name type="scientific">Buchnera aphidicola subsp. Schizaphis graminum (strain Sg)</name>
    <dbReference type="NCBI Taxonomy" id="198804"/>
    <lineage>
        <taxon>Bacteria</taxon>
        <taxon>Pseudomonadati</taxon>
        <taxon>Pseudomonadota</taxon>
        <taxon>Gammaproteobacteria</taxon>
        <taxon>Enterobacterales</taxon>
        <taxon>Erwiniaceae</taxon>
        <taxon>Buchnera</taxon>
    </lineage>
</organism>
<dbReference type="EC" id="1.3.1.98" evidence="1"/>
<dbReference type="EMBL" id="AE013218">
    <property type="protein sequence ID" value="AAM67613.1"/>
    <property type="molecule type" value="Genomic_DNA"/>
</dbReference>
<dbReference type="RefSeq" id="WP_011053579.1">
    <property type="nucleotide sequence ID" value="NC_004061.1"/>
</dbReference>
<dbReference type="SMR" id="Q8KA63"/>
<dbReference type="STRING" id="198804.BUsg_042"/>
<dbReference type="GeneID" id="93003509"/>
<dbReference type="KEGG" id="bas:BUsg_042"/>
<dbReference type="eggNOG" id="COG0812">
    <property type="taxonomic scope" value="Bacteria"/>
</dbReference>
<dbReference type="HOGENOM" id="CLU_035304_0_0_6"/>
<dbReference type="UniPathway" id="UPA00219"/>
<dbReference type="Proteomes" id="UP000000416">
    <property type="component" value="Chromosome"/>
</dbReference>
<dbReference type="GO" id="GO:0005829">
    <property type="term" value="C:cytosol"/>
    <property type="evidence" value="ECO:0007669"/>
    <property type="project" value="TreeGrafter"/>
</dbReference>
<dbReference type="GO" id="GO:0071949">
    <property type="term" value="F:FAD binding"/>
    <property type="evidence" value="ECO:0007669"/>
    <property type="project" value="InterPro"/>
</dbReference>
<dbReference type="GO" id="GO:0008762">
    <property type="term" value="F:UDP-N-acetylmuramate dehydrogenase activity"/>
    <property type="evidence" value="ECO:0007669"/>
    <property type="project" value="UniProtKB-UniRule"/>
</dbReference>
<dbReference type="GO" id="GO:0051301">
    <property type="term" value="P:cell division"/>
    <property type="evidence" value="ECO:0007669"/>
    <property type="project" value="UniProtKB-KW"/>
</dbReference>
<dbReference type="GO" id="GO:0071555">
    <property type="term" value="P:cell wall organization"/>
    <property type="evidence" value="ECO:0007669"/>
    <property type="project" value="UniProtKB-KW"/>
</dbReference>
<dbReference type="GO" id="GO:0009252">
    <property type="term" value="P:peptidoglycan biosynthetic process"/>
    <property type="evidence" value="ECO:0007669"/>
    <property type="project" value="UniProtKB-UniRule"/>
</dbReference>
<dbReference type="GO" id="GO:0008360">
    <property type="term" value="P:regulation of cell shape"/>
    <property type="evidence" value="ECO:0007669"/>
    <property type="project" value="UniProtKB-KW"/>
</dbReference>
<dbReference type="Gene3D" id="3.30.465.10">
    <property type="match status" value="1"/>
</dbReference>
<dbReference type="Gene3D" id="3.90.78.10">
    <property type="entry name" value="UDP-N-acetylenolpyruvoylglucosamine reductase, C-terminal domain"/>
    <property type="match status" value="1"/>
</dbReference>
<dbReference type="Gene3D" id="3.30.43.10">
    <property type="entry name" value="Uridine Diphospho-n-acetylenolpyruvylglucosamine Reductase, domain 2"/>
    <property type="match status" value="1"/>
</dbReference>
<dbReference type="HAMAP" id="MF_00037">
    <property type="entry name" value="MurB"/>
    <property type="match status" value="1"/>
</dbReference>
<dbReference type="InterPro" id="IPR016166">
    <property type="entry name" value="FAD-bd_PCMH"/>
</dbReference>
<dbReference type="InterPro" id="IPR036318">
    <property type="entry name" value="FAD-bd_PCMH-like_sf"/>
</dbReference>
<dbReference type="InterPro" id="IPR016167">
    <property type="entry name" value="FAD-bd_PCMH_sub1"/>
</dbReference>
<dbReference type="InterPro" id="IPR016169">
    <property type="entry name" value="FAD-bd_PCMH_sub2"/>
</dbReference>
<dbReference type="InterPro" id="IPR003170">
    <property type="entry name" value="MurB"/>
</dbReference>
<dbReference type="InterPro" id="IPR011601">
    <property type="entry name" value="MurB_C"/>
</dbReference>
<dbReference type="InterPro" id="IPR036635">
    <property type="entry name" value="MurB_C_sf"/>
</dbReference>
<dbReference type="InterPro" id="IPR006094">
    <property type="entry name" value="Oxid_FAD_bind_N"/>
</dbReference>
<dbReference type="NCBIfam" id="TIGR00179">
    <property type="entry name" value="murB"/>
    <property type="match status" value="1"/>
</dbReference>
<dbReference type="NCBIfam" id="NF000755">
    <property type="entry name" value="PRK00046.1"/>
    <property type="match status" value="1"/>
</dbReference>
<dbReference type="PANTHER" id="PTHR21071">
    <property type="entry name" value="UDP-N-ACETYLENOLPYRUVOYLGLUCOSAMINE REDUCTASE"/>
    <property type="match status" value="1"/>
</dbReference>
<dbReference type="PANTHER" id="PTHR21071:SF4">
    <property type="entry name" value="UDP-N-ACETYLENOLPYRUVOYLGLUCOSAMINE REDUCTASE"/>
    <property type="match status" value="1"/>
</dbReference>
<dbReference type="Pfam" id="PF01565">
    <property type="entry name" value="FAD_binding_4"/>
    <property type="match status" value="1"/>
</dbReference>
<dbReference type="Pfam" id="PF02873">
    <property type="entry name" value="MurB_C"/>
    <property type="match status" value="1"/>
</dbReference>
<dbReference type="SUPFAM" id="SSF56176">
    <property type="entry name" value="FAD-binding/transporter-associated domain-like"/>
    <property type="match status" value="1"/>
</dbReference>
<dbReference type="SUPFAM" id="SSF56194">
    <property type="entry name" value="Uridine diphospho-N-Acetylenolpyruvylglucosamine reductase, MurB, C-terminal domain"/>
    <property type="match status" value="1"/>
</dbReference>
<dbReference type="PROSITE" id="PS51387">
    <property type="entry name" value="FAD_PCMH"/>
    <property type="match status" value="1"/>
</dbReference>
<protein>
    <recommendedName>
        <fullName evidence="1">UDP-N-acetylenolpyruvoylglucosamine reductase</fullName>
        <ecNumber evidence="1">1.3.1.98</ecNumber>
    </recommendedName>
    <alternativeName>
        <fullName evidence="1">UDP-N-acetylmuramate dehydrogenase</fullName>
    </alternativeName>
</protein>
<keyword id="KW-0131">Cell cycle</keyword>
<keyword id="KW-0132">Cell division</keyword>
<keyword id="KW-0133">Cell shape</keyword>
<keyword id="KW-0961">Cell wall biogenesis/degradation</keyword>
<keyword id="KW-0963">Cytoplasm</keyword>
<keyword id="KW-0274">FAD</keyword>
<keyword id="KW-0285">Flavoprotein</keyword>
<keyword id="KW-0521">NADP</keyword>
<keyword id="KW-0560">Oxidoreductase</keyword>
<keyword id="KW-0573">Peptidoglycan synthesis</keyword>
<sequence length="344" mass="39519">MYKKKKSYQSLKNLNTFSINVTAKKIIFVKTIQSLMKIWKTCNLSNIPYIILGEGSNVLFLENYAGVVIINRIKGIRIEEKKKNWLLHVFSGEKWHDLVKYTLRMGFFGLENLALIPGSVGSAAIQNIGAYGLELKNICQYVDVISLENGKTIRLKKKTCNFSYRSSIFKYKYNNGYAVIAVGIKIKKNWKPVIFSSLLKSKKILEINAYKIFNIVCQIRKKKLPNLKKLGNAGSFFKNPIITSKKTKKILSSYMKMPYYIQKNGFIKIPAAWLIEKYNFKNIQIGDAAIYKKQKLILINLKKANSKDILKLAQIIQKCILKKFGIYLEPEVDFINSLGKVKLL</sequence>
<gene>
    <name evidence="1" type="primary">murB</name>
    <name type="ordered locus">BUsg_042</name>
</gene>
<comment type="function">
    <text evidence="1">Cell wall formation.</text>
</comment>
<comment type="catalytic activity">
    <reaction evidence="1">
        <text>UDP-N-acetyl-alpha-D-muramate + NADP(+) = UDP-N-acetyl-3-O-(1-carboxyvinyl)-alpha-D-glucosamine + NADPH + H(+)</text>
        <dbReference type="Rhea" id="RHEA:12248"/>
        <dbReference type="ChEBI" id="CHEBI:15378"/>
        <dbReference type="ChEBI" id="CHEBI:57783"/>
        <dbReference type="ChEBI" id="CHEBI:58349"/>
        <dbReference type="ChEBI" id="CHEBI:68483"/>
        <dbReference type="ChEBI" id="CHEBI:70757"/>
        <dbReference type="EC" id="1.3.1.98"/>
    </reaction>
</comment>
<comment type="cofactor">
    <cofactor evidence="1">
        <name>FAD</name>
        <dbReference type="ChEBI" id="CHEBI:57692"/>
    </cofactor>
</comment>
<comment type="pathway">
    <text evidence="1">Cell wall biogenesis; peptidoglycan biosynthesis.</text>
</comment>
<comment type="subcellular location">
    <subcellularLocation>
        <location evidence="1">Cytoplasm</location>
    </subcellularLocation>
</comment>
<comment type="similarity">
    <text evidence="1">Belongs to the MurB family.</text>
</comment>
<evidence type="ECO:0000255" key="1">
    <source>
        <dbReference type="HAMAP-Rule" id="MF_00037"/>
    </source>
</evidence>
<feature type="chain" id="PRO_0000179188" description="UDP-N-acetylenolpyruvoylglucosamine reductase">
    <location>
        <begin position="1"/>
        <end position="344"/>
    </location>
</feature>
<feature type="domain" description="FAD-binding PCMH-type" evidence="1">
    <location>
        <begin position="19"/>
        <end position="189"/>
    </location>
</feature>
<feature type="active site" evidence="1">
    <location>
        <position position="165"/>
    </location>
</feature>
<feature type="active site" description="Proton donor" evidence="1">
    <location>
        <position position="235"/>
    </location>
</feature>
<feature type="active site" evidence="1">
    <location>
        <position position="331"/>
    </location>
</feature>